<comment type="function">
    <text evidence="1">The beta subunit is responsible for the synthesis of L-tryptophan from indole and L-serine.</text>
</comment>
<comment type="catalytic activity">
    <reaction evidence="1">
        <text>(1S,2R)-1-C-(indol-3-yl)glycerol 3-phosphate + L-serine = D-glyceraldehyde 3-phosphate + L-tryptophan + H2O</text>
        <dbReference type="Rhea" id="RHEA:10532"/>
        <dbReference type="ChEBI" id="CHEBI:15377"/>
        <dbReference type="ChEBI" id="CHEBI:33384"/>
        <dbReference type="ChEBI" id="CHEBI:57912"/>
        <dbReference type="ChEBI" id="CHEBI:58866"/>
        <dbReference type="ChEBI" id="CHEBI:59776"/>
        <dbReference type="EC" id="4.2.1.20"/>
    </reaction>
</comment>
<comment type="cofactor">
    <cofactor evidence="1">
        <name>pyridoxal 5'-phosphate</name>
        <dbReference type="ChEBI" id="CHEBI:597326"/>
    </cofactor>
</comment>
<comment type="pathway">
    <text evidence="1">Amino-acid biosynthesis; L-tryptophan biosynthesis; L-tryptophan from chorismate: step 5/5.</text>
</comment>
<comment type="subunit">
    <text evidence="1">Tetramer of two alpha and two beta chains.</text>
</comment>
<comment type="similarity">
    <text evidence="1">Belongs to the TrpB family.</text>
</comment>
<protein>
    <recommendedName>
        <fullName evidence="1">Tryptophan synthase beta chain</fullName>
        <ecNumber evidence="1">4.2.1.20</ecNumber>
    </recommendedName>
</protein>
<organism>
    <name type="scientific">Haemophilus influenzae (strain PittGG)</name>
    <dbReference type="NCBI Taxonomy" id="374931"/>
    <lineage>
        <taxon>Bacteria</taxon>
        <taxon>Pseudomonadati</taxon>
        <taxon>Pseudomonadota</taxon>
        <taxon>Gammaproteobacteria</taxon>
        <taxon>Pasteurellales</taxon>
        <taxon>Pasteurellaceae</taxon>
        <taxon>Haemophilus</taxon>
    </lineage>
</organism>
<dbReference type="EC" id="4.2.1.20" evidence="1"/>
<dbReference type="EMBL" id="CP000672">
    <property type="protein sequence ID" value="ABQ99300.1"/>
    <property type="molecule type" value="Genomic_DNA"/>
</dbReference>
<dbReference type="SMR" id="A5UEU5"/>
<dbReference type="KEGG" id="hiq:CGSHiGG_01025"/>
<dbReference type="HOGENOM" id="CLU_016734_3_1_6"/>
<dbReference type="UniPathway" id="UPA00035">
    <property type="reaction ID" value="UER00044"/>
</dbReference>
<dbReference type="Proteomes" id="UP000001990">
    <property type="component" value="Chromosome"/>
</dbReference>
<dbReference type="GO" id="GO:0005737">
    <property type="term" value="C:cytoplasm"/>
    <property type="evidence" value="ECO:0007669"/>
    <property type="project" value="TreeGrafter"/>
</dbReference>
<dbReference type="GO" id="GO:0004834">
    <property type="term" value="F:tryptophan synthase activity"/>
    <property type="evidence" value="ECO:0007669"/>
    <property type="project" value="UniProtKB-UniRule"/>
</dbReference>
<dbReference type="CDD" id="cd06446">
    <property type="entry name" value="Trp-synth_B"/>
    <property type="match status" value="1"/>
</dbReference>
<dbReference type="FunFam" id="3.40.50.1100:FF:000001">
    <property type="entry name" value="Tryptophan synthase beta chain"/>
    <property type="match status" value="1"/>
</dbReference>
<dbReference type="FunFam" id="3.40.50.1100:FF:000004">
    <property type="entry name" value="Tryptophan synthase beta chain"/>
    <property type="match status" value="1"/>
</dbReference>
<dbReference type="Gene3D" id="3.40.50.1100">
    <property type="match status" value="2"/>
</dbReference>
<dbReference type="HAMAP" id="MF_00133">
    <property type="entry name" value="Trp_synth_beta"/>
    <property type="match status" value="1"/>
</dbReference>
<dbReference type="InterPro" id="IPR006653">
    <property type="entry name" value="Trp_synth_b_CS"/>
</dbReference>
<dbReference type="InterPro" id="IPR006654">
    <property type="entry name" value="Trp_synth_beta"/>
</dbReference>
<dbReference type="InterPro" id="IPR023026">
    <property type="entry name" value="Trp_synth_beta/beta-like"/>
</dbReference>
<dbReference type="InterPro" id="IPR001926">
    <property type="entry name" value="TrpB-like_PALP"/>
</dbReference>
<dbReference type="InterPro" id="IPR036052">
    <property type="entry name" value="TrpB-like_PALP_sf"/>
</dbReference>
<dbReference type="NCBIfam" id="TIGR00263">
    <property type="entry name" value="trpB"/>
    <property type="match status" value="1"/>
</dbReference>
<dbReference type="PANTHER" id="PTHR48077:SF3">
    <property type="entry name" value="TRYPTOPHAN SYNTHASE"/>
    <property type="match status" value="1"/>
</dbReference>
<dbReference type="PANTHER" id="PTHR48077">
    <property type="entry name" value="TRYPTOPHAN SYNTHASE-RELATED"/>
    <property type="match status" value="1"/>
</dbReference>
<dbReference type="Pfam" id="PF00291">
    <property type="entry name" value="PALP"/>
    <property type="match status" value="1"/>
</dbReference>
<dbReference type="PIRSF" id="PIRSF001413">
    <property type="entry name" value="Trp_syn_beta"/>
    <property type="match status" value="1"/>
</dbReference>
<dbReference type="SUPFAM" id="SSF53686">
    <property type="entry name" value="Tryptophan synthase beta subunit-like PLP-dependent enzymes"/>
    <property type="match status" value="1"/>
</dbReference>
<dbReference type="PROSITE" id="PS00168">
    <property type="entry name" value="TRP_SYNTHASE_BETA"/>
    <property type="match status" value="1"/>
</dbReference>
<proteinExistence type="inferred from homology"/>
<evidence type="ECO:0000255" key="1">
    <source>
        <dbReference type="HAMAP-Rule" id="MF_00133"/>
    </source>
</evidence>
<accession>A5UEU5</accession>
<name>TRPB_HAEIG</name>
<gene>
    <name evidence="1" type="primary">trpB</name>
    <name type="ordered locus">CGSHiGG_01025</name>
</gene>
<feature type="chain" id="PRO_1000076390" description="Tryptophan synthase beta chain">
    <location>
        <begin position="1"/>
        <end position="398"/>
    </location>
</feature>
<feature type="modified residue" description="N6-(pyridoxal phosphate)lysine" evidence="1">
    <location>
        <position position="88"/>
    </location>
</feature>
<keyword id="KW-0028">Amino-acid biosynthesis</keyword>
<keyword id="KW-0057">Aromatic amino acid biosynthesis</keyword>
<keyword id="KW-0456">Lyase</keyword>
<keyword id="KW-0663">Pyridoxal phosphate</keyword>
<keyword id="KW-0822">Tryptophan biosynthesis</keyword>
<reference key="1">
    <citation type="journal article" date="2007" name="Genome Biol.">
        <title>Characterization and modeling of the Haemophilus influenzae core and supragenomes based on the complete genomic sequences of Rd and 12 clinical nontypeable strains.</title>
        <authorList>
            <person name="Hogg J.S."/>
            <person name="Hu F.Z."/>
            <person name="Janto B."/>
            <person name="Boissy R."/>
            <person name="Hayes J."/>
            <person name="Keefe R."/>
            <person name="Post J.C."/>
            <person name="Ehrlich G.D."/>
        </authorList>
    </citation>
    <scope>NUCLEOTIDE SEQUENCE [LARGE SCALE GENOMIC DNA]</scope>
    <source>
        <strain>PittGG</strain>
    </source>
</reference>
<sequence length="398" mass="43502">MSDTLLNPYFGEFGGMYVPEILVPVLKQLEQAFVEAQNDPTFQAEFADLLKNYAGRPTALTLCRNLTKGTKTKLYLKREDLLHGGAHKTNQVLGQILLAKRMGKTRIIAETGAGQHGVATALACAMLDMPCRVYMGAKDVERQSPNVFRMRLMGAEVIPVQKGSCSLKDACCEAMRDWSANYETTHYLLGTAAGPHPFPTIVREFQKMIGEETKRQILEREGRLPDAVIAAVGGGSNAIGMFADFIDESNVRLIGVEPAGKGIETGEHGAPLKHGTTGIYFGMKSPIMQDKDGQIEESYSISAGLDFPSVGPQHAYLNEIGRAEYVSITDEEALNAFQELAKHEGIIPALESSHALAYALKLIKQNPEKEQLLVVNLSGRGDKDIFTVDKILTEKGMK</sequence>